<keyword id="KW-0150">Chloroplast</keyword>
<keyword id="KW-0472">Membrane</keyword>
<keyword id="KW-0602">Photosynthesis</keyword>
<keyword id="KW-0934">Plastid</keyword>
<keyword id="KW-0793">Thylakoid</keyword>
<keyword id="KW-0812">Transmembrane</keyword>
<keyword id="KW-1133">Transmembrane helix</keyword>
<proteinExistence type="inferred from homology"/>
<accession>A6H5I8</accession>
<name>YCF4_CYCTA</name>
<dbReference type="EMBL" id="AP009339">
    <property type="protein sequence ID" value="BAF64954.1"/>
    <property type="molecule type" value="Genomic_DNA"/>
</dbReference>
<dbReference type="RefSeq" id="YP_001312213.1">
    <property type="nucleotide sequence ID" value="NC_009618.1"/>
</dbReference>
<dbReference type="GeneID" id="5309526"/>
<dbReference type="GO" id="GO:0009535">
    <property type="term" value="C:chloroplast thylakoid membrane"/>
    <property type="evidence" value="ECO:0007669"/>
    <property type="project" value="UniProtKB-SubCell"/>
</dbReference>
<dbReference type="GO" id="GO:0009522">
    <property type="term" value="C:photosystem I"/>
    <property type="evidence" value="ECO:0007669"/>
    <property type="project" value="InterPro"/>
</dbReference>
<dbReference type="GO" id="GO:0015979">
    <property type="term" value="P:photosynthesis"/>
    <property type="evidence" value="ECO:0007669"/>
    <property type="project" value="UniProtKB-UniRule"/>
</dbReference>
<dbReference type="HAMAP" id="MF_00437">
    <property type="entry name" value="Ycf4"/>
    <property type="match status" value="1"/>
</dbReference>
<dbReference type="InterPro" id="IPR003359">
    <property type="entry name" value="PSI_Ycf4_assembly"/>
</dbReference>
<dbReference type="NCBIfam" id="NF002712">
    <property type="entry name" value="PRK02542.1"/>
    <property type="match status" value="1"/>
</dbReference>
<dbReference type="PANTHER" id="PTHR33288">
    <property type="match status" value="1"/>
</dbReference>
<dbReference type="PANTHER" id="PTHR33288:SF4">
    <property type="entry name" value="PHOTOSYSTEM I ASSEMBLY PROTEIN YCF4"/>
    <property type="match status" value="1"/>
</dbReference>
<dbReference type="Pfam" id="PF02392">
    <property type="entry name" value="Ycf4"/>
    <property type="match status" value="1"/>
</dbReference>
<organism>
    <name type="scientific">Cycas taitungensis</name>
    <name type="common">Prince sago</name>
    <name type="synonym">Cycas taiwaniana</name>
    <dbReference type="NCBI Taxonomy" id="54799"/>
    <lineage>
        <taxon>Eukaryota</taxon>
        <taxon>Viridiplantae</taxon>
        <taxon>Streptophyta</taxon>
        <taxon>Embryophyta</taxon>
        <taxon>Tracheophyta</taxon>
        <taxon>Spermatophyta</taxon>
        <taxon>Cycadidae</taxon>
        <taxon>Cycadales</taxon>
        <taxon>Cycadaceae</taxon>
        <taxon>Cycas</taxon>
    </lineage>
</organism>
<reference key="1">
    <citation type="journal article" date="2007" name="Mol. Biol. Evol.">
        <title>Chloroplast genome (cpDNA) of Cycas taitungensis and 56 cp protein-coding genes of Gnetum parvifolium: insights into cpDNA evolution and phylogeny of extant seed plants.</title>
        <authorList>
            <person name="Wu C.-S."/>
            <person name="Wang Y.-N."/>
            <person name="Liu S.-M."/>
            <person name="Chaw S.-M."/>
        </authorList>
    </citation>
    <scope>NUCLEOTIDE SEQUENCE [LARGE SCALE GENOMIC DNA]</scope>
</reference>
<comment type="function">
    <text evidence="1">Seems to be required for the assembly of the photosystem I complex.</text>
</comment>
<comment type="subcellular location">
    <subcellularLocation>
        <location evidence="1">Plastid</location>
        <location evidence="1">Chloroplast thylakoid membrane</location>
        <topology evidence="1">Multi-pass membrane protein</topology>
    </subcellularLocation>
</comment>
<comment type="similarity">
    <text evidence="1">Belongs to the Ycf4 family.</text>
</comment>
<gene>
    <name evidence="1" type="primary">ycf4</name>
</gene>
<evidence type="ECO:0000255" key="1">
    <source>
        <dbReference type="HAMAP-Rule" id="MF_00437"/>
    </source>
</evidence>
<geneLocation type="chloroplast"/>
<feature type="chain" id="PRO_0000326007" description="Photosystem I assembly protein Ycf4">
    <location>
        <begin position="1"/>
        <end position="184"/>
    </location>
</feature>
<feature type="transmembrane region" description="Helical" evidence="1">
    <location>
        <begin position="25"/>
        <end position="45"/>
    </location>
</feature>
<feature type="transmembrane region" description="Helical" evidence="1">
    <location>
        <begin position="57"/>
        <end position="77"/>
    </location>
</feature>
<protein>
    <recommendedName>
        <fullName evidence="1">Photosystem I assembly protein Ycf4</fullName>
    </recommendedName>
</protein>
<sequence length="184" mass="21450">MNWRSEWLWIEPITGSRRTSNFCRACILFFGSLGFFLVGISSYLGKNLIPVLSSQQILFVPQGIVMCFYGIAGLFISSYLWCTILWNVGSGYDKFDEEEGIVCLFRWGFPGRNRRTFLRFLMKDIQAIKMEVQEGLYPRRVLYMEIKGQRDIPLARTGENLTLREMEQKAAELARFLRISIEVF</sequence>